<proteinExistence type="inferred from homology"/>
<dbReference type="EMBL" id="CP001068">
    <property type="protein sequence ID" value="ACD26211.1"/>
    <property type="molecule type" value="Genomic_DNA"/>
</dbReference>
<dbReference type="SMR" id="B2U9V3"/>
<dbReference type="STRING" id="402626.Rpic_1063"/>
<dbReference type="KEGG" id="rpi:Rpic_1063"/>
<dbReference type="eggNOG" id="COG1160">
    <property type="taxonomic scope" value="Bacteria"/>
</dbReference>
<dbReference type="HOGENOM" id="CLU_016077_6_2_4"/>
<dbReference type="GO" id="GO:0016887">
    <property type="term" value="F:ATP hydrolysis activity"/>
    <property type="evidence" value="ECO:0007669"/>
    <property type="project" value="InterPro"/>
</dbReference>
<dbReference type="GO" id="GO:0005525">
    <property type="term" value="F:GTP binding"/>
    <property type="evidence" value="ECO:0007669"/>
    <property type="project" value="UniProtKB-UniRule"/>
</dbReference>
<dbReference type="GO" id="GO:0043022">
    <property type="term" value="F:ribosome binding"/>
    <property type="evidence" value="ECO:0007669"/>
    <property type="project" value="TreeGrafter"/>
</dbReference>
<dbReference type="GO" id="GO:0042254">
    <property type="term" value="P:ribosome biogenesis"/>
    <property type="evidence" value="ECO:0007669"/>
    <property type="project" value="UniProtKB-KW"/>
</dbReference>
<dbReference type="CDD" id="cd01894">
    <property type="entry name" value="EngA1"/>
    <property type="match status" value="1"/>
</dbReference>
<dbReference type="CDD" id="cd01895">
    <property type="entry name" value="EngA2"/>
    <property type="match status" value="1"/>
</dbReference>
<dbReference type="FunFam" id="3.30.300.20:FF:000004">
    <property type="entry name" value="GTPase Der"/>
    <property type="match status" value="1"/>
</dbReference>
<dbReference type="FunFam" id="3.40.50.300:FF:000040">
    <property type="entry name" value="GTPase Der"/>
    <property type="match status" value="1"/>
</dbReference>
<dbReference type="FunFam" id="3.40.50.300:FF:000057">
    <property type="entry name" value="GTPase Der"/>
    <property type="match status" value="1"/>
</dbReference>
<dbReference type="Gene3D" id="3.30.300.20">
    <property type="match status" value="1"/>
</dbReference>
<dbReference type="Gene3D" id="3.40.50.300">
    <property type="entry name" value="P-loop containing nucleotide triphosphate hydrolases"/>
    <property type="match status" value="2"/>
</dbReference>
<dbReference type="HAMAP" id="MF_00195">
    <property type="entry name" value="GTPase_Der"/>
    <property type="match status" value="1"/>
</dbReference>
<dbReference type="InterPro" id="IPR003593">
    <property type="entry name" value="AAA+_ATPase"/>
</dbReference>
<dbReference type="InterPro" id="IPR031166">
    <property type="entry name" value="G_ENGA"/>
</dbReference>
<dbReference type="InterPro" id="IPR006073">
    <property type="entry name" value="GTP-bd"/>
</dbReference>
<dbReference type="InterPro" id="IPR016484">
    <property type="entry name" value="GTPase_Der"/>
</dbReference>
<dbReference type="InterPro" id="IPR032859">
    <property type="entry name" value="KH_dom-like"/>
</dbReference>
<dbReference type="InterPro" id="IPR015946">
    <property type="entry name" value="KH_dom-like_a/b"/>
</dbReference>
<dbReference type="InterPro" id="IPR027417">
    <property type="entry name" value="P-loop_NTPase"/>
</dbReference>
<dbReference type="InterPro" id="IPR005225">
    <property type="entry name" value="Small_GTP-bd"/>
</dbReference>
<dbReference type="NCBIfam" id="TIGR03594">
    <property type="entry name" value="GTPase_EngA"/>
    <property type="match status" value="1"/>
</dbReference>
<dbReference type="NCBIfam" id="TIGR00231">
    <property type="entry name" value="small_GTP"/>
    <property type="match status" value="2"/>
</dbReference>
<dbReference type="PANTHER" id="PTHR43834">
    <property type="entry name" value="GTPASE DER"/>
    <property type="match status" value="1"/>
</dbReference>
<dbReference type="PANTHER" id="PTHR43834:SF6">
    <property type="entry name" value="GTPASE DER"/>
    <property type="match status" value="1"/>
</dbReference>
<dbReference type="Pfam" id="PF14714">
    <property type="entry name" value="KH_dom-like"/>
    <property type="match status" value="1"/>
</dbReference>
<dbReference type="Pfam" id="PF01926">
    <property type="entry name" value="MMR_HSR1"/>
    <property type="match status" value="2"/>
</dbReference>
<dbReference type="PIRSF" id="PIRSF006485">
    <property type="entry name" value="GTP-binding_EngA"/>
    <property type="match status" value="1"/>
</dbReference>
<dbReference type="PRINTS" id="PR00326">
    <property type="entry name" value="GTP1OBG"/>
</dbReference>
<dbReference type="SMART" id="SM00382">
    <property type="entry name" value="AAA"/>
    <property type="match status" value="2"/>
</dbReference>
<dbReference type="SUPFAM" id="SSF52540">
    <property type="entry name" value="P-loop containing nucleoside triphosphate hydrolases"/>
    <property type="match status" value="2"/>
</dbReference>
<dbReference type="PROSITE" id="PS51712">
    <property type="entry name" value="G_ENGA"/>
    <property type="match status" value="2"/>
</dbReference>
<protein>
    <recommendedName>
        <fullName evidence="1">GTPase Der</fullName>
    </recommendedName>
    <alternativeName>
        <fullName evidence="1">GTP-binding protein EngA</fullName>
    </alternativeName>
</protein>
<feature type="chain" id="PRO_1000099152" description="GTPase Der">
    <location>
        <begin position="1"/>
        <end position="447"/>
    </location>
</feature>
<feature type="domain" description="EngA-type G 1">
    <location>
        <begin position="3"/>
        <end position="167"/>
    </location>
</feature>
<feature type="domain" description="EngA-type G 2">
    <location>
        <begin position="181"/>
        <end position="354"/>
    </location>
</feature>
<feature type="domain" description="KH-like" evidence="1">
    <location>
        <begin position="355"/>
        <end position="439"/>
    </location>
</feature>
<feature type="binding site" evidence="1">
    <location>
        <begin position="9"/>
        <end position="16"/>
    </location>
    <ligand>
        <name>GTP</name>
        <dbReference type="ChEBI" id="CHEBI:37565"/>
        <label>1</label>
    </ligand>
</feature>
<feature type="binding site" evidence="1">
    <location>
        <begin position="56"/>
        <end position="60"/>
    </location>
    <ligand>
        <name>GTP</name>
        <dbReference type="ChEBI" id="CHEBI:37565"/>
        <label>1</label>
    </ligand>
</feature>
<feature type="binding site" evidence="1">
    <location>
        <begin position="119"/>
        <end position="122"/>
    </location>
    <ligand>
        <name>GTP</name>
        <dbReference type="ChEBI" id="CHEBI:37565"/>
        <label>1</label>
    </ligand>
</feature>
<feature type="binding site" evidence="1">
    <location>
        <begin position="187"/>
        <end position="194"/>
    </location>
    <ligand>
        <name>GTP</name>
        <dbReference type="ChEBI" id="CHEBI:37565"/>
        <label>2</label>
    </ligand>
</feature>
<feature type="binding site" evidence="1">
    <location>
        <begin position="234"/>
        <end position="238"/>
    </location>
    <ligand>
        <name>GTP</name>
        <dbReference type="ChEBI" id="CHEBI:37565"/>
        <label>2</label>
    </ligand>
</feature>
<feature type="binding site" evidence="1">
    <location>
        <begin position="299"/>
        <end position="302"/>
    </location>
    <ligand>
        <name>GTP</name>
        <dbReference type="ChEBI" id="CHEBI:37565"/>
        <label>2</label>
    </ligand>
</feature>
<organism>
    <name type="scientific">Ralstonia pickettii (strain 12J)</name>
    <dbReference type="NCBI Taxonomy" id="402626"/>
    <lineage>
        <taxon>Bacteria</taxon>
        <taxon>Pseudomonadati</taxon>
        <taxon>Pseudomonadota</taxon>
        <taxon>Betaproteobacteria</taxon>
        <taxon>Burkholderiales</taxon>
        <taxon>Burkholderiaceae</taxon>
        <taxon>Ralstonia</taxon>
    </lineage>
</organism>
<evidence type="ECO:0000255" key="1">
    <source>
        <dbReference type="HAMAP-Rule" id="MF_00195"/>
    </source>
</evidence>
<reference key="1">
    <citation type="submission" date="2008-05" db="EMBL/GenBank/DDBJ databases">
        <title>Complete sequence of chromosome 1 of Ralstonia pickettii 12J.</title>
        <authorList>
            <person name="Lucas S."/>
            <person name="Copeland A."/>
            <person name="Lapidus A."/>
            <person name="Glavina del Rio T."/>
            <person name="Dalin E."/>
            <person name="Tice H."/>
            <person name="Bruce D."/>
            <person name="Goodwin L."/>
            <person name="Pitluck S."/>
            <person name="Meincke L."/>
            <person name="Brettin T."/>
            <person name="Detter J.C."/>
            <person name="Han C."/>
            <person name="Kuske C.R."/>
            <person name="Schmutz J."/>
            <person name="Larimer F."/>
            <person name="Land M."/>
            <person name="Hauser L."/>
            <person name="Kyrpides N."/>
            <person name="Mikhailova N."/>
            <person name="Marsh T."/>
            <person name="Richardson P."/>
        </authorList>
    </citation>
    <scope>NUCLEOTIDE SEQUENCE [LARGE SCALE GENOMIC DNA]</scope>
    <source>
        <strain>12J</strain>
    </source>
</reference>
<keyword id="KW-0342">GTP-binding</keyword>
<keyword id="KW-0547">Nucleotide-binding</keyword>
<keyword id="KW-0677">Repeat</keyword>
<keyword id="KW-0690">Ribosome biogenesis</keyword>
<gene>
    <name evidence="1" type="primary">der</name>
    <name type="synonym">engA</name>
    <name type="ordered locus">Rpic_1063</name>
</gene>
<sequence length="447" mass="48968">MKPVIALVGRPNVGKSTLFNRLTRSRDALVADIPGLTRDRHYGEGRVGDRPFIAIDTGGFEPVAKEGIVAEMAKQTRQAVVEADVVIFIVDGRLGLAPQDRVIADYLRKTGRRILLAVNKAEGMRYTAVASDFYELGLGDPAAISAAHGDGVNDLVAEALDLAFAERPELAEAADAHDHGTRIAIVGRPNVGKSTLVNALIGEERVIAFDMPGTTRDAIYVDFERNGKPYTLIDTAGLRKRGKVFEAIEKFSVVKTLQSIADANVVVLILDAQQDISDQDAHIAGFIVESGRALVIGVNKWDGLTGHARDRIKHDMERKLQFLSFANVHYISAKERTGIGALMKSVDAAYAAAMVKLPTPKLTRVLMEAVEYQQPRRAGVSRPKLRYAHQGGSNPPIVVIHGNALSNIPETYRRFLEGRFREAFQLKGTPLRIEFRTNKNPYAQSND</sequence>
<comment type="function">
    <text evidence="1">GTPase that plays an essential role in the late steps of ribosome biogenesis.</text>
</comment>
<comment type="subunit">
    <text evidence="1">Associates with the 50S ribosomal subunit.</text>
</comment>
<comment type="similarity">
    <text evidence="1">Belongs to the TRAFAC class TrmE-Era-EngA-EngB-Septin-like GTPase superfamily. EngA (Der) GTPase family.</text>
</comment>
<name>DER_RALPJ</name>
<accession>B2U9V3</accession>